<proteinExistence type="inferred from homology"/>
<name>GHRA_ECOK1</name>
<protein>
    <recommendedName>
        <fullName evidence="1">Glyoxylate/hydroxypyruvate reductase A</fullName>
        <ecNumber evidence="1">1.1.1.79</ecNumber>
        <ecNumber evidence="1">1.1.1.81</ecNumber>
    </recommendedName>
    <alternativeName>
        <fullName evidence="1">2-ketoacid reductase</fullName>
    </alternativeName>
</protein>
<dbReference type="EC" id="1.1.1.79" evidence="1"/>
<dbReference type="EC" id="1.1.1.81" evidence="1"/>
<dbReference type="EMBL" id="CP000468">
    <property type="protein sequence ID" value="ABJ00421.1"/>
    <property type="status" value="ALT_INIT"/>
    <property type="molecule type" value="Genomic_DNA"/>
</dbReference>
<dbReference type="RefSeq" id="WP_000351298.1">
    <property type="nucleotide sequence ID" value="NZ_CADILS010000112.1"/>
</dbReference>
<dbReference type="SMR" id="A1A9T1"/>
<dbReference type="KEGG" id="ecv:APECO1_118"/>
<dbReference type="HOGENOM" id="CLU_019796_1_0_6"/>
<dbReference type="Proteomes" id="UP000008216">
    <property type="component" value="Chromosome"/>
</dbReference>
<dbReference type="GO" id="GO:0005829">
    <property type="term" value="C:cytosol"/>
    <property type="evidence" value="ECO:0007669"/>
    <property type="project" value="UniProtKB-ARBA"/>
</dbReference>
<dbReference type="GO" id="GO:0030267">
    <property type="term" value="F:glyoxylate reductase (NADPH) activity"/>
    <property type="evidence" value="ECO:0007669"/>
    <property type="project" value="UniProtKB-UniRule"/>
</dbReference>
<dbReference type="GO" id="GO:0008465">
    <property type="term" value="F:hydroxypyruvate reductase (NADH) activity"/>
    <property type="evidence" value="ECO:0007669"/>
    <property type="project" value="RHEA"/>
</dbReference>
<dbReference type="GO" id="GO:0120509">
    <property type="term" value="F:hydroxypyruvate reductase (NADPH) activity"/>
    <property type="evidence" value="ECO:0007669"/>
    <property type="project" value="RHEA"/>
</dbReference>
<dbReference type="GO" id="GO:0051287">
    <property type="term" value="F:NAD binding"/>
    <property type="evidence" value="ECO:0007669"/>
    <property type="project" value="InterPro"/>
</dbReference>
<dbReference type="CDD" id="cd12164">
    <property type="entry name" value="GDH_like_2"/>
    <property type="match status" value="1"/>
</dbReference>
<dbReference type="FunFam" id="3.40.50.720:FF:000110">
    <property type="entry name" value="Glyoxylate/hydroxypyruvate reductase A"/>
    <property type="match status" value="1"/>
</dbReference>
<dbReference type="Gene3D" id="3.40.50.720">
    <property type="entry name" value="NAD(P)-binding Rossmann-like Domain"/>
    <property type="match status" value="2"/>
</dbReference>
<dbReference type="HAMAP" id="MF_01666">
    <property type="entry name" value="2_Hacid_dh_C_GhrA"/>
    <property type="match status" value="1"/>
</dbReference>
<dbReference type="InterPro" id="IPR029753">
    <property type="entry name" value="D-isomer_DH_CS"/>
</dbReference>
<dbReference type="InterPro" id="IPR006140">
    <property type="entry name" value="D-isomer_DH_NAD-bd"/>
</dbReference>
<dbReference type="InterPro" id="IPR023514">
    <property type="entry name" value="GhrA_Enterobacterales"/>
</dbReference>
<dbReference type="InterPro" id="IPR036291">
    <property type="entry name" value="NAD(P)-bd_dom_sf"/>
</dbReference>
<dbReference type="NCBIfam" id="NF012013">
    <property type="entry name" value="PRK15469.1"/>
    <property type="match status" value="1"/>
</dbReference>
<dbReference type="PANTHER" id="PTHR43333">
    <property type="entry name" value="2-HACID_DH_C DOMAIN-CONTAINING PROTEIN"/>
    <property type="match status" value="1"/>
</dbReference>
<dbReference type="PANTHER" id="PTHR43333:SF1">
    <property type="entry name" value="D-ISOMER SPECIFIC 2-HYDROXYACID DEHYDROGENASE NAD-BINDING DOMAIN-CONTAINING PROTEIN"/>
    <property type="match status" value="1"/>
</dbReference>
<dbReference type="Pfam" id="PF02826">
    <property type="entry name" value="2-Hacid_dh_C"/>
    <property type="match status" value="1"/>
</dbReference>
<dbReference type="SUPFAM" id="SSF51735">
    <property type="entry name" value="NAD(P)-binding Rossmann-fold domains"/>
    <property type="match status" value="1"/>
</dbReference>
<dbReference type="PROSITE" id="PS00671">
    <property type="entry name" value="D_2_HYDROXYACID_DH_3"/>
    <property type="match status" value="1"/>
</dbReference>
<reference key="1">
    <citation type="journal article" date="2007" name="J. Bacteriol.">
        <title>The genome sequence of avian pathogenic Escherichia coli strain O1:K1:H7 shares strong similarities with human extraintestinal pathogenic E. coli genomes.</title>
        <authorList>
            <person name="Johnson T.J."/>
            <person name="Kariyawasam S."/>
            <person name="Wannemuehler Y."/>
            <person name="Mangiamele P."/>
            <person name="Johnson S.J."/>
            <person name="Doetkott C."/>
            <person name="Skyberg J.A."/>
            <person name="Lynne A.M."/>
            <person name="Johnson J.R."/>
            <person name="Nolan L.K."/>
        </authorList>
    </citation>
    <scope>NUCLEOTIDE SEQUENCE [LARGE SCALE GENOMIC DNA]</scope>
</reference>
<organism>
    <name type="scientific">Escherichia coli O1:K1 / APEC</name>
    <dbReference type="NCBI Taxonomy" id="405955"/>
    <lineage>
        <taxon>Bacteria</taxon>
        <taxon>Pseudomonadati</taxon>
        <taxon>Pseudomonadota</taxon>
        <taxon>Gammaproteobacteria</taxon>
        <taxon>Enterobacterales</taxon>
        <taxon>Enterobacteriaceae</taxon>
        <taxon>Escherichia</taxon>
    </lineage>
</organism>
<sequence length="312" mass="35372">MDIIFYHPTFDTQWWIEALRKAIPQARVRAWKSGDNDSADYALVWHPPVEMLAGRDLKAVFALGAGVDSILSKLQAHPEMLKPSVPLFRLEDTGMGEQMQEYAVSQVLHWFRRFDDYRIQQNSSHWQPLPEYHREDFTIGILGAGVLGSKVAQSLQTWRFPLRCWSRTRKSWPGVQSFAGREELSAFLSQCRVLINLLPNTPETVGIINQQLLEKLPDGAYLLNLARGVHVVEDDLLAALDSGKVKGAMLDVFNREPLPPESPLWQHPRVTITPHVAAITRPAEAVEYISRTIAQLEKGERLCGQVDRARGY</sequence>
<keyword id="KW-0963">Cytoplasm</keyword>
<keyword id="KW-0520">NAD</keyword>
<keyword id="KW-0521">NADP</keyword>
<keyword id="KW-0560">Oxidoreductase</keyword>
<keyword id="KW-1185">Reference proteome</keyword>
<comment type="function">
    <text evidence="1">Catalyzes the NADPH-dependent reduction of glyoxylate and hydroxypyruvate into glycolate and glycerate, respectively.</text>
</comment>
<comment type="catalytic activity">
    <reaction evidence="1">
        <text>glycolate + NADP(+) = glyoxylate + NADPH + H(+)</text>
        <dbReference type="Rhea" id="RHEA:10992"/>
        <dbReference type="ChEBI" id="CHEBI:15378"/>
        <dbReference type="ChEBI" id="CHEBI:29805"/>
        <dbReference type="ChEBI" id="CHEBI:36655"/>
        <dbReference type="ChEBI" id="CHEBI:57783"/>
        <dbReference type="ChEBI" id="CHEBI:58349"/>
        <dbReference type="EC" id="1.1.1.79"/>
    </reaction>
</comment>
<comment type="catalytic activity">
    <reaction evidence="1">
        <text>(R)-glycerate + NAD(+) = 3-hydroxypyruvate + NADH + H(+)</text>
        <dbReference type="Rhea" id="RHEA:17905"/>
        <dbReference type="ChEBI" id="CHEBI:15378"/>
        <dbReference type="ChEBI" id="CHEBI:16659"/>
        <dbReference type="ChEBI" id="CHEBI:17180"/>
        <dbReference type="ChEBI" id="CHEBI:57540"/>
        <dbReference type="ChEBI" id="CHEBI:57945"/>
        <dbReference type="EC" id="1.1.1.81"/>
    </reaction>
</comment>
<comment type="catalytic activity">
    <reaction evidence="1">
        <text>(R)-glycerate + NADP(+) = 3-hydroxypyruvate + NADPH + H(+)</text>
        <dbReference type="Rhea" id="RHEA:18657"/>
        <dbReference type="ChEBI" id="CHEBI:15378"/>
        <dbReference type="ChEBI" id="CHEBI:16659"/>
        <dbReference type="ChEBI" id="CHEBI:17180"/>
        <dbReference type="ChEBI" id="CHEBI:57783"/>
        <dbReference type="ChEBI" id="CHEBI:58349"/>
        <dbReference type="EC" id="1.1.1.81"/>
    </reaction>
</comment>
<comment type="subcellular location">
    <subcellularLocation>
        <location evidence="1">Cytoplasm</location>
    </subcellularLocation>
</comment>
<comment type="similarity">
    <text evidence="1">Belongs to the D-isomer specific 2-hydroxyacid dehydrogenase family. GhrA subfamily.</text>
</comment>
<comment type="sequence caution" evidence="2">
    <conflict type="erroneous initiation">
        <sequence resource="EMBL-CDS" id="ABJ00421"/>
    </conflict>
</comment>
<feature type="chain" id="PRO_0000348357" description="Glyoxylate/hydroxypyruvate reductase A">
    <location>
        <begin position="1"/>
        <end position="312"/>
    </location>
</feature>
<feature type="active site" evidence="1">
    <location>
        <position position="227"/>
    </location>
</feature>
<feature type="active site" description="Proton donor" evidence="1">
    <location>
        <position position="275"/>
    </location>
</feature>
<gene>
    <name evidence="1" type="primary">ghrA</name>
    <name type="ordered locus">Ecok1_09270</name>
    <name type="ORF">APECO1_118</name>
</gene>
<evidence type="ECO:0000255" key="1">
    <source>
        <dbReference type="HAMAP-Rule" id="MF_01666"/>
    </source>
</evidence>
<evidence type="ECO:0000305" key="2"/>
<accession>A1A9T1</accession>